<accession>Q2L1C6</accession>
<proteinExistence type="inferred from homology"/>
<comment type="function">
    <text evidence="1">Protease subunit of a proteasome-like degradation complex believed to be a general protein degrading machinery.</text>
</comment>
<comment type="catalytic activity">
    <reaction evidence="1">
        <text>ATP-dependent cleavage of peptide bonds with broad specificity.</text>
        <dbReference type="EC" id="3.4.25.2"/>
    </reaction>
</comment>
<comment type="activity regulation">
    <text evidence="1">Allosterically activated by HslU binding.</text>
</comment>
<comment type="subunit">
    <text evidence="1">A double ring-shaped homohexamer of HslV is capped on each side by a ring-shaped HslU homohexamer. The assembly of the HslU/HslV complex is dependent on binding of ATP.</text>
</comment>
<comment type="subcellular location">
    <subcellularLocation>
        <location evidence="1">Cytoplasm</location>
    </subcellularLocation>
</comment>
<comment type="similarity">
    <text evidence="1">Belongs to the peptidase T1B family. HslV subfamily.</text>
</comment>
<reference key="1">
    <citation type="journal article" date="2006" name="J. Bacteriol.">
        <title>Comparison of the genome sequence of the poultry pathogen Bordetella avium with those of B. bronchiseptica, B. pertussis, and B. parapertussis reveals extensive diversity in surface structures associated with host interaction.</title>
        <authorList>
            <person name="Sebaihia M."/>
            <person name="Preston A."/>
            <person name="Maskell D.J."/>
            <person name="Kuzmiak H."/>
            <person name="Connell T.D."/>
            <person name="King N.D."/>
            <person name="Orndorff P.E."/>
            <person name="Miyamoto D.M."/>
            <person name="Thomson N.R."/>
            <person name="Harris D."/>
            <person name="Goble A."/>
            <person name="Lord A."/>
            <person name="Murphy L."/>
            <person name="Quail M.A."/>
            <person name="Rutter S."/>
            <person name="Squares R."/>
            <person name="Squares S."/>
            <person name="Woodward J."/>
            <person name="Parkhill J."/>
            <person name="Temple L.M."/>
        </authorList>
    </citation>
    <scope>NUCLEOTIDE SEQUENCE [LARGE SCALE GENOMIC DNA]</scope>
    <source>
        <strain>197N</strain>
    </source>
</reference>
<evidence type="ECO:0000255" key="1">
    <source>
        <dbReference type="HAMAP-Rule" id="MF_00248"/>
    </source>
</evidence>
<organism>
    <name type="scientific">Bordetella avium (strain 197N)</name>
    <dbReference type="NCBI Taxonomy" id="360910"/>
    <lineage>
        <taxon>Bacteria</taxon>
        <taxon>Pseudomonadati</taxon>
        <taxon>Pseudomonadota</taxon>
        <taxon>Betaproteobacteria</taxon>
        <taxon>Burkholderiales</taxon>
        <taxon>Alcaligenaceae</taxon>
        <taxon>Bordetella</taxon>
    </lineage>
</organism>
<name>HSLV_BORA1</name>
<gene>
    <name evidence="1" type="primary">hslV</name>
    <name type="ordered locus">BAV0143</name>
</gene>
<dbReference type="EC" id="3.4.25.2" evidence="1"/>
<dbReference type="EMBL" id="AM167904">
    <property type="protein sequence ID" value="CAJ47749.1"/>
    <property type="molecule type" value="Genomic_DNA"/>
</dbReference>
<dbReference type="RefSeq" id="WP_012415847.1">
    <property type="nucleotide sequence ID" value="NC_010645.1"/>
</dbReference>
<dbReference type="SMR" id="Q2L1C6"/>
<dbReference type="STRING" id="360910.BAV0143"/>
<dbReference type="MEROPS" id="T01.006"/>
<dbReference type="GeneID" id="92936611"/>
<dbReference type="KEGG" id="bav:BAV0143"/>
<dbReference type="eggNOG" id="COG5405">
    <property type="taxonomic scope" value="Bacteria"/>
</dbReference>
<dbReference type="HOGENOM" id="CLU_093872_1_0_4"/>
<dbReference type="OrthoDB" id="9804884at2"/>
<dbReference type="Proteomes" id="UP000001977">
    <property type="component" value="Chromosome"/>
</dbReference>
<dbReference type="GO" id="GO:0009376">
    <property type="term" value="C:HslUV protease complex"/>
    <property type="evidence" value="ECO:0007669"/>
    <property type="project" value="UniProtKB-UniRule"/>
</dbReference>
<dbReference type="GO" id="GO:0005839">
    <property type="term" value="C:proteasome core complex"/>
    <property type="evidence" value="ECO:0007669"/>
    <property type="project" value="InterPro"/>
</dbReference>
<dbReference type="GO" id="GO:0046872">
    <property type="term" value="F:metal ion binding"/>
    <property type="evidence" value="ECO:0007669"/>
    <property type="project" value="UniProtKB-KW"/>
</dbReference>
<dbReference type="GO" id="GO:0004298">
    <property type="term" value="F:threonine-type endopeptidase activity"/>
    <property type="evidence" value="ECO:0007669"/>
    <property type="project" value="UniProtKB-KW"/>
</dbReference>
<dbReference type="GO" id="GO:0051603">
    <property type="term" value="P:proteolysis involved in protein catabolic process"/>
    <property type="evidence" value="ECO:0007669"/>
    <property type="project" value="InterPro"/>
</dbReference>
<dbReference type="CDD" id="cd01913">
    <property type="entry name" value="protease_HslV"/>
    <property type="match status" value="1"/>
</dbReference>
<dbReference type="FunFam" id="3.60.20.10:FF:000002">
    <property type="entry name" value="ATP-dependent protease subunit HslV"/>
    <property type="match status" value="1"/>
</dbReference>
<dbReference type="Gene3D" id="3.60.20.10">
    <property type="entry name" value="Glutamine Phosphoribosylpyrophosphate, subunit 1, domain 1"/>
    <property type="match status" value="1"/>
</dbReference>
<dbReference type="HAMAP" id="MF_00248">
    <property type="entry name" value="HslV"/>
    <property type="match status" value="1"/>
</dbReference>
<dbReference type="InterPro" id="IPR022281">
    <property type="entry name" value="ATP-dep_Prtase_HsIV_su"/>
</dbReference>
<dbReference type="InterPro" id="IPR029055">
    <property type="entry name" value="Ntn_hydrolases_N"/>
</dbReference>
<dbReference type="InterPro" id="IPR001353">
    <property type="entry name" value="Proteasome_sua/b"/>
</dbReference>
<dbReference type="InterPro" id="IPR023333">
    <property type="entry name" value="Proteasome_suB-type"/>
</dbReference>
<dbReference type="NCBIfam" id="TIGR03692">
    <property type="entry name" value="ATP_dep_HslV"/>
    <property type="match status" value="1"/>
</dbReference>
<dbReference type="NCBIfam" id="NF003964">
    <property type="entry name" value="PRK05456.1"/>
    <property type="match status" value="1"/>
</dbReference>
<dbReference type="PANTHER" id="PTHR32194:SF0">
    <property type="entry name" value="ATP-DEPENDENT PROTEASE SUBUNIT HSLV"/>
    <property type="match status" value="1"/>
</dbReference>
<dbReference type="PANTHER" id="PTHR32194">
    <property type="entry name" value="METALLOPROTEASE TLDD"/>
    <property type="match status" value="1"/>
</dbReference>
<dbReference type="Pfam" id="PF00227">
    <property type="entry name" value="Proteasome"/>
    <property type="match status" value="1"/>
</dbReference>
<dbReference type="PIRSF" id="PIRSF039093">
    <property type="entry name" value="HslV"/>
    <property type="match status" value="1"/>
</dbReference>
<dbReference type="SUPFAM" id="SSF56235">
    <property type="entry name" value="N-terminal nucleophile aminohydrolases (Ntn hydrolases)"/>
    <property type="match status" value="1"/>
</dbReference>
<dbReference type="PROSITE" id="PS51476">
    <property type="entry name" value="PROTEASOME_BETA_2"/>
    <property type="match status" value="1"/>
</dbReference>
<sequence length="179" mass="19447">MEQFHATTIVCVRRGNRVALGGDGQVTLGNIVIKGTARKIRRLYHDKVLAGFAGATADAFTLQERFEAKLEKHQGHLMRAAVELTRDWRTDRVLRRLEAMLIVADAEHTLVLTGNGDVLEPEHGLAAIGSGGAYAQSAALALLRNTELPPETIVKQSLEIAGDLCIYTNQNHVIETLGG</sequence>
<keyword id="KW-0021">Allosteric enzyme</keyword>
<keyword id="KW-0963">Cytoplasm</keyword>
<keyword id="KW-0378">Hydrolase</keyword>
<keyword id="KW-0479">Metal-binding</keyword>
<keyword id="KW-0645">Protease</keyword>
<keyword id="KW-1185">Reference proteome</keyword>
<keyword id="KW-0915">Sodium</keyword>
<keyword id="KW-0346">Stress response</keyword>
<keyword id="KW-0888">Threonine protease</keyword>
<feature type="chain" id="PRO_1000012581" description="ATP-dependent protease subunit HslV">
    <location>
        <begin position="1"/>
        <end position="179"/>
    </location>
</feature>
<feature type="active site" evidence="1">
    <location>
        <position position="7"/>
    </location>
</feature>
<feature type="binding site" evidence="1">
    <location>
        <position position="162"/>
    </location>
    <ligand>
        <name>Na(+)</name>
        <dbReference type="ChEBI" id="CHEBI:29101"/>
    </ligand>
</feature>
<feature type="binding site" evidence="1">
    <location>
        <position position="165"/>
    </location>
    <ligand>
        <name>Na(+)</name>
        <dbReference type="ChEBI" id="CHEBI:29101"/>
    </ligand>
</feature>
<feature type="binding site" evidence="1">
    <location>
        <position position="168"/>
    </location>
    <ligand>
        <name>Na(+)</name>
        <dbReference type="ChEBI" id="CHEBI:29101"/>
    </ligand>
</feature>
<protein>
    <recommendedName>
        <fullName evidence="1">ATP-dependent protease subunit HslV</fullName>
        <ecNumber evidence="1">3.4.25.2</ecNumber>
    </recommendedName>
</protein>